<sequence length="63" mass="6952">MSRGNQRDVDRARNLKKSQASKKKQAGDPTKRLEAQAEIMRAKQRAADERKAAEANGGSKGKK</sequence>
<reference key="1">
    <citation type="journal article" date="2002" name="Nature">
        <title>The genome sequence of Schizosaccharomyces pombe.</title>
        <authorList>
            <person name="Wood V."/>
            <person name="Gwilliam R."/>
            <person name="Rajandream M.A."/>
            <person name="Lyne M.H."/>
            <person name="Lyne R."/>
            <person name="Stewart A."/>
            <person name="Sgouros J.G."/>
            <person name="Peat N."/>
            <person name="Hayles J."/>
            <person name="Baker S.G."/>
            <person name="Basham D."/>
            <person name="Bowman S."/>
            <person name="Brooks K."/>
            <person name="Brown D."/>
            <person name="Brown S."/>
            <person name="Chillingworth T."/>
            <person name="Churcher C.M."/>
            <person name="Collins M."/>
            <person name="Connor R."/>
            <person name="Cronin A."/>
            <person name="Davis P."/>
            <person name="Feltwell T."/>
            <person name="Fraser A."/>
            <person name="Gentles S."/>
            <person name="Goble A."/>
            <person name="Hamlin N."/>
            <person name="Harris D.E."/>
            <person name="Hidalgo J."/>
            <person name="Hodgson G."/>
            <person name="Holroyd S."/>
            <person name="Hornsby T."/>
            <person name="Howarth S."/>
            <person name="Huckle E.J."/>
            <person name="Hunt S."/>
            <person name="Jagels K."/>
            <person name="James K.D."/>
            <person name="Jones L."/>
            <person name="Jones M."/>
            <person name="Leather S."/>
            <person name="McDonald S."/>
            <person name="McLean J."/>
            <person name="Mooney P."/>
            <person name="Moule S."/>
            <person name="Mungall K.L."/>
            <person name="Murphy L.D."/>
            <person name="Niblett D."/>
            <person name="Odell C."/>
            <person name="Oliver K."/>
            <person name="O'Neil S."/>
            <person name="Pearson D."/>
            <person name="Quail M.A."/>
            <person name="Rabbinowitsch E."/>
            <person name="Rutherford K.M."/>
            <person name="Rutter S."/>
            <person name="Saunders D."/>
            <person name="Seeger K."/>
            <person name="Sharp S."/>
            <person name="Skelton J."/>
            <person name="Simmonds M.N."/>
            <person name="Squares R."/>
            <person name="Squares S."/>
            <person name="Stevens K."/>
            <person name="Taylor K."/>
            <person name="Taylor R.G."/>
            <person name="Tivey A."/>
            <person name="Walsh S.V."/>
            <person name="Warren T."/>
            <person name="Whitehead S."/>
            <person name="Woodward J.R."/>
            <person name="Volckaert G."/>
            <person name="Aert R."/>
            <person name="Robben J."/>
            <person name="Grymonprez B."/>
            <person name="Weltjens I."/>
            <person name="Vanstreels E."/>
            <person name="Rieger M."/>
            <person name="Schaefer M."/>
            <person name="Mueller-Auer S."/>
            <person name="Gabel C."/>
            <person name="Fuchs M."/>
            <person name="Duesterhoeft A."/>
            <person name="Fritzc C."/>
            <person name="Holzer E."/>
            <person name="Moestl D."/>
            <person name="Hilbert H."/>
            <person name="Borzym K."/>
            <person name="Langer I."/>
            <person name="Beck A."/>
            <person name="Lehrach H."/>
            <person name="Reinhardt R."/>
            <person name="Pohl T.M."/>
            <person name="Eger P."/>
            <person name="Zimmermann W."/>
            <person name="Wedler H."/>
            <person name="Wambutt R."/>
            <person name="Purnelle B."/>
            <person name="Goffeau A."/>
            <person name="Cadieu E."/>
            <person name="Dreano S."/>
            <person name="Gloux S."/>
            <person name="Lelaure V."/>
            <person name="Mottier S."/>
            <person name="Galibert F."/>
            <person name="Aves S.J."/>
            <person name="Xiang Z."/>
            <person name="Hunt C."/>
            <person name="Moore K."/>
            <person name="Hurst S.M."/>
            <person name="Lucas M."/>
            <person name="Rochet M."/>
            <person name="Gaillardin C."/>
            <person name="Tallada V.A."/>
            <person name="Garzon A."/>
            <person name="Thode G."/>
            <person name="Daga R.R."/>
            <person name="Cruzado L."/>
            <person name="Jimenez J."/>
            <person name="Sanchez M."/>
            <person name="del Rey F."/>
            <person name="Benito J."/>
            <person name="Dominguez A."/>
            <person name="Revuelta J.L."/>
            <person name="Moreno S."/>
            <person name="Armstrong J."/>
            <person name="Forsburg S.L."/>
            <person name="Cerutti L."/>
            <person name="Lowe T."/>
            <person name="McCombie W.R."/>
            <person name="Paulsen I."/>
            <person name="Potashkin J."/>
            <person name="Shpakovski G.V."/>
            <person name="Ussery D."/>
            <person name="Barrell B.G."/>
            <person name="Nurse P."/>
        </authorList>
    </citation>
    <scope>NUCLEOTIDE SEQUENCE [LARGE SCALE GENOMIC DNA]</scope>
    <source>
        <strain>972 / ATCC 24843</strain>
    </source>
</reference>
<reference key="2">
    <citation type="journal article" date="2006" name="Nat. Biotechnol.">
        <title>ORFeome cloning and global analysis of protein localization in the fission yeast Schizosaccharomyces pombe.</title>
        <authorList>
            <person name="Matsuyama A."/>
            <person name="Arai R."/>
            <person name="Yashiroda Y."/>
            <person name="Shirai A."/>
            <person name="Kamata A."/>
            <person name="Sekido S."/>
            <person name="Kobayashi Y."/>
            <person name="Hashimoto A."/>
            <person name="Hamamoto M."/>
            <person name="Hiraoka Y."/>
            <person name="Horinouchi S."/>
            <person name="Yoshida M."/>
        </authorList>
    </citation>
    <scope>SUBCELLULAR LOCATION [LARGE SCALE ANALYSIS]</scope>
</reference>
<protein>
    <recommendedName>
        <fullName>SERF-like protein C1705.02</fullName>
    </recommendedName>
</protein>
<organism>
    <name type="scientific">Schizosaccharomyces pombe (strain 972 / ATCC 24843)</name>
    <name type="common">Fission yeast</name>
    <dbReference type="NCBI Taxonomy" id="284812"/>
    <lineage>
        <taxon>Eukaryota</taxon>
        <taxon>Fungi</taxon>
        <taxon>Dikarya</taxon>
        <taxon>Ascomycota</taxon>
        <taxon>Taphrinomycotina</taxon>
        <taxon>Schizosaccharomycetes</taxon>
        <taxon>Schizosaccharomycetales</taxon>
        <taxon>Schizosaccharomycetaceae</taxon>
        <taxon>Schizosaccharomyces</taxon>
    </lineage>
</organism>
<accession>Q9UTF0</accession>
<comment type="subcellular location">
    <subcellularLocation>
        <location evidence="2">Cytoplasm</location>
    </subcellularLocation>
    <subcellularLocation>
        <location evidence="2">Nucleus</location>
        <location evidence="2">Nucleolus</location>
    </subcellularLocation>
</comment>
<comment type="similarity">
    <text evidence="3">Belongs to the SERF family.</text>
</comment>
<name>YIN2_SCHPO</name>
<keyword id="KW-0963">Cytoplasm</keyword>
<keyword id="KW-0539">Nucleus</keyword>
<keyword id="KW-1185">Reference proteome</keyword>
<evidence type="ECO:0000256" key="1">
    <source>
        <dbReference type="SAM" id="MobiDB-lite"/>
    </source>
</evidence>
<evidence type="ECO:0000269" key="2">
    <source>
    </source>
</evidence>
<evidence type="ECO:0000305" key="3"/>
<gene>
    <name type="ORF">SPAC1705.02</name>
</gene>
<feature type="chain" id="PRO_0000357055" description="SERF-like protein C1705.02">
    <location>
        <begin position="1"/>
        <end position="63"/>
    </location>
</feature>
<feature type="region of interest" description="Disordered" evidence="1">
    <location>
        <begin position="1"/>
        <end position="63"/>
    </location>
</feature>
<feature type="compositionally biased region" description="Basic and acidic residues" evidence="1">
    <location>
        <begin position="1"/>
        <end position="13"/>
    </location>
</feature>
<feature type="compositionally biased region" description="Basic residues" evidence="1">
    <location>
        <begin position="14"/>
        <end position="24"/>
    </location>
</feature>
<feature type="compositionally biased region" description="Basic and acidic residues" evidence="1">
    <location>
        <begin position="25"/>
        <end position="35"/>
    </location>
</feature>
<dbReference type="EMBL" id="Z98976">
    <property type="protein sequence ID" value="CAB59614.1"/>
    <property type="molecule type" value="Genomic_DNA"/>
</dbReference>
<dbReference type="EMBL" id="CU329670">
    <property type="protein sequence ID" value="CAB86945.1"/>
    <property type="molecule type" value="Genomic_DNA"/>
</dbReference>
<dbReference type="PIR" id="T38070">
    <property type="entry name" value="T38070"/>
</dbReference>
<dbReference type="RefSeq" id="NP_593386.1">
    <property type="nucleotide sequence ID" value="NM_001018818.2"/>
</dbReference>
<dbReference type="BioGRID" id="278811">
    <property type="interactions" value="22"/>
</dbReference>
<dbReference type="FunCoup" id="Q9UTF0">
    <property type="interactions" value="68"/>
</dbReference>
<dbReference type="PaxDb" id="4896-SPAC1705.02.1"/>
<dbReference type="EnsemblFungi" id="SPAC1705.02.1">
    <property type="protein sequence ID" value="SPAC1705.02.1:pep"/>
    <property type="gene ID" value="SPAC1705.02"/>
</dbReference>
<dbReference type="KEGG" id="spo:2542345"/>
<dbReference type="PomBase" id="SPAC1705.02"/>
<dbReference type="VEuPathDB" id="FungiDB:SPAC1705.02"/>
<dbReference type="eggNOG" id="KOG4488">
    <property type="taxonomic scope" value="Eukaryota"/>
</dbReference>
<dbReference type="HOGENOM" id="CLU_165034_4_1_1"/>
<dbReference type="InParanoid" id="Q9UTF0"/>
<dbReference type="OMA" id="HAKKQTE"/>
<dbReference type="PRO" id="PR:Q9UTF0"/>
<dbReference type="Proteomes" id="UP000002485">
    <property type="component" value="Chromosome I"/>
</dbReference>
<dbReference type="GO" id="GO:0005829">
    <property type="term" value="C:cytosol"/>
    <property type="evidence" value="ECO:0007005"/>
    <property type="project" value="PomBase"/>
</dbReference>
<dbReference type="GO" id="GO:0005730">
    <property type="term" value="C:nucleolus"/>
    <property type="evidence" value="ECO:0007005"/>
    <property type="project" value="PomBase"/>
</dbReference>
<dbReference type="GO" id="GO:0005634">
    <property type="term" value="C:nucleus"/>
    <property type="evidence" value="ECO:0007005"/>
    <property type="project" value="PomBase"/>
</dbReference>
<dbReference type="InterPro" id="IPR007513">
    <property type="entry name" value="SERF-like_N"/>
</dbReference>
<dbReference type="Pfam" id="PF04419">
    <property type="entry name" value="SERF-like_N"/>
    <property type="match status" value="1"/>
</dbReference>
<proteinExistence type="inferred from homology"/>